<proteinExistence type="inferred from homology"/>
<sequence length="317" mass="34116">MALTELRIASRRSQLAMVQTNWVKAELEKAHPGLTITVEAMATQGDKILDVALAKIGDKGLFTKELEAQMLVGRADIAVHSLKDLPTNLPEGLMLGCITEREDPADALVLHAKNKHLNLATLPEGAVVGTSSLRRLAQLRHHYPHLEFKDVRGNVITRLEKLDSGAYDCLILAAAGLGRLGFADRIDQSIPGDISLHAVGQGALGIECVENQPDVMEIIKVLEHGPTSQRCLAERAFLRELEGGCQVPIGVNTRFEGDQLILTGMVASLDGKRLIREQASGPSTDPESIGLELAATLKGLGAGEILKEIFDAVRPEA</sequence>
<evidence type="ECO:0000255" key="1">
    <source>
        <dbReference type="HAMAP-Rule" id="MF_00260"/>
    </source>
</evidence>
<reference key="1">
    <citation type="submission" date="2005-08" db="EMBL/GenBank/DDBJ databases">
        <title>Complete sequence of Synechococcus sp. CC9902.</title>
        <authorList>
            <person name="Copeland A."/>
            <person name="Lucas S."/>
            <person name="Lapidus A."/>
            <person name="Barry K."/>
            <person name="Detter J.C."/>
            <person name="Glavina T."/>
            <person name="Hammon N."/>
            <person name="Israni S."/>
            <person name="Pitluck S."/>
            <person name="Martinez M."/>
            <person name="Schmutz J."/>
            <person name="Larimer F."/>
            <person name="Land M."/>
            <person name="Kyrpides N."/>
            <person name="Ivanova N."/>
            <person name="Richardson P."/>
        </authorList>
    </citation>
    <scope>NUCLEOTIDE SEQUENCE [LARGE SCALE GENOMIC DNA]</scope>
    <source>
        <strain>CC9902</strain>
    </source>
</reference>
<feature type="chain" id="PRO_0000304282" description="Porphobilinogen deaminase">
    <location>
        <begin position="1"/>
        <end position="317"/>
    </location>
</feature>
<feature type="modified residue" description="S-(dipyrrolylmethanemethyl)cysteine" evidence="1">
    <location>
        <position position="245"/>
    </location>
</feature>
<gene>
    <name evidence="1" type="primary">hemC</name>
    <name type="ordered locus">Syncc9902_1680</name>
</gene>
<organism>
    <name type="scientific">Synechococcus sp. (strain CC9902)</name>
    <dbReference type="NCBI Taxonomy" id="316279"/>
    <lineage>
        <taxon>Bacteria</taxon>
        <taxon>Bacillati</taxon>
        <taxon>Cyanobacteriota</taxon>
        <taxon>Cyanophyceae</taxon>
        <taxon>Synechococcales</taxon>
        <taxon>Synechococcaceae</taxon>
        <taxon>Synechococcus</taxon>
    </lineage>
</organism>
<keyword id="KW-0149">Chlorophyll biosynthesis</keyword>
<keyword id="KW-0627">Porphyrin biosynthesis</keyword>
<keyword id="KW-1185">Reference proteome</keyword>
<keyword id="KW-0808">Transferase</keyword>
<comment type="function">
    <text evidence="1">Tetrapolymerization of the monopyrrole PBG into the hydroxymethylbilane pre-uroporphyrinogen in several discrete steps.</text>
</comment>
<comment type="catalytic activity">
    <reaction evidence="1">
        <text>4 porphobilinogen + H2O = hydroxymethylbilane + 4 NH4(+)</text>
        <dbReference type="Rhea" id="RHEA:13185"/>
        <dbReference type="ChEBI" id="CHEBI:15377"/>
        <dbReference type="ChEBI" id="CHEBI:28938"/>
        <dbReference type="ChEBI" id="CHEBI:57845"/>
        <dbReference type="ChEBI" id="CHEBI:58126"/>
        <dbReference type="EC" id="2.5.1.61"/>
    </reaction>
</comment>
<comment type="cofactor">
    <cofactor evidence="1">
        <name>dipyrromethane</name>
        <dbReference type="ChEBI" id="CHEBI:60342"/>
    </cofactor>
    <text evidence="1">Binds 1 dipyrromethane group covalently.</text>
</comment>
<comment type="pathway">
    <text evidence="1">Porphyrin-containing compound metabolism; protoporphyrin-IX biosynthesis; coproporphyrinogen-III from 5-aminolevulinate: step 2/4.</text>
</comment>
<comment type="pathway">
    <text evidence="1">Porphyrin-containing compound metabolism; chlorophyll biosynthesis.</text>
</comment>
<comment type="subunit">
    <text evidence="1">Monomer.</text>
</comment>
<comment type="miscellaneous">
    <text evidence="1">The porphobilinogen subunits are added to the dipyrromethane group.</text>
</comment>
<comment type="similarity">
    <text evidence="1">Belongs to the HMBS family.</text>
</comment>
<protein>
    <recommendedName>
        <fullName evidence="1">Porphobilinogen deaminase</fullName>
        <shortName evidence="1">PBG</shortName>
        <ecNumber evidence="1">2.5.1.61</ecNumber>
    </recommendedName>
    <alternativeName>
        <fullName evidence="1">Hydroxymethylbilane synthase</fullName>
        <shortName evidence="1">HMBS</shortName>
    </alternativeName>
    <alternativeName>
        <fullName evidence="1">Pre-uroporphyrinogen synthase</fullName>
    </alternativeName>
</protein>
<dbReference type="EC" id="2.5.1.61" evidence="1"/>
<dbReference type="EMBL" id="CP000097">
    <property type="protein sequence ID" value="ABB26638.1"/>
    <property type="molecule type" value="Genomic_DNA"/>
</dbReference>
<dbReference type="RefSeq" id="WP_011360449.1">
    <property type="nucleotide sequence ID" value="NC_007513.1"/>
</dbReference>
<dbReference type="SMR" id="Q3AWQ4"/>
<dbReference type="STRING" id="316279.Syncc9902_1680"/>
<dbReference type="KEGG" id="sye:Syncc9902_1680"/>
<dbReference type="eggNOG" id="COG0181">
    <property type="taxonomic scope" value="Bacteria"/>
</dbReference>
<dbReference type="HOGENOM" id="CLU_019704_0_2_3"/>
<dbReference type="OrthoDB" id="9810298at2"/>
<dbReference type="UniPathway" id="UPA00251">
    <property type="reaction ID" value="UER00319"/>
</dbReference>
<dbReference type="UniPathway" id="UPA00668"/>
<dbReference type="Proteomes" id="UP000002712">
    <property type="component" value="Chromosome"/>
</dbReference>
<dbReference type="GO" id="GO:0005737">
    <property type="term" value="C:cytoplasm"/>
    <property type="evidence" value="ECO:0007669"/>
    <property type="project" value="TreeGrafter"/>
</dbReference>
<dbReference type="GO" id="GO:0004418">
    <property type="term" value="F:hydroxymethylbilane synthase activity"/>
    <property type="evidence" value="ECO:0007669"/>
    <property type="project" value="UniProtKB-UniRule"/>
</dbReference>
<dbReference type="GO" id="GO:0015995">
    <property type="term" value="P:chlorophyll biosynthetic process"/>
    <property type="evidence" value="ECO:0007669"/>
    <property type="project" value="UniProtKB-UniRule"/>
</dbReference>
<dbReference type="GO" id="GO:0006782">
    <property type="term" value="P:protoporphyrinogen IX biosynthetic process"/>
    <property type="evidence" value="ECO:0007669"/>
    <property type="project" value="UniProtKB-UniRule"/>
</dbReference>
<dbReference type="CDD" id="cd13645">
    <property type="entry name" value="PBP2_HuPBGD_like"/>
    <property type="match status" value="1"/>
</dbReference>
<dbReference type="FunFam" id="3.30.160.40:FF:000002">
    <property type="entry name" value="Porphobilinogen deaminase"/>
    <property type="match status" value="1"/>
</dbReference>
<dbReference type="FunFam" id="3.40.190.10:FF:000004">
    <property type="entry name" value="Porphobilinogen deaminase"/>
    <property type="match status" value="1"/>
</dbReference>
<dbReference type="FunFam" id="3.40.190.10:FF:000005">
    <property type="entry name" value="Porphobilinogen deaminase"/>
    <property type="match status" value="1"/>
</dbReference>
<dbReference type="Gene3D" id="3.40.190.10">
    <property type="entry name" value="Periplasmic binding protein-like II"/>
    <property type="match status" value="2"/>
</dbReference>
<dbReference type="Gene3D" id="3.30.160.40">
    <property type="entry name" value="Porphobilinogen deaminase, C-terminal domain"/>
    <property type="match status" value="1"/>
</dbReference>
<dbReference type="HAMAP" id="MF_00260">
    <property type="entry name" value="Porphobil_deam"/>
    <property type="match status" value="1"/>
</dbReference>
<dbReference type="InterPro" id="IPR000860">
    <property type="entry name" value="HemC"/>
</dbReference>
<dbReference type="InterPro" id="IPR022419">
    <property type="entry name" value="Porphobilin_deaminase_cofac_BS"/>
</dbReference>
<dbReference type="InterPro" id="IPR022417">
    <property type="entry name" value="Porphobilin_deaminase_N"/>
</dbReference>
<dbReference type="InterPro" id="IPR022418">
    <property type="entry name" value="Porphobilinogen_deaminase_C"/>
</dbReference>
<dbReference type="InterPro" id="IPR036803">
    <property type="entry name" value="Porphobilinogen_deaminase_C_sf"/>
</dbReference>
<dbReference type="NCBIfam" id="TIGR00212">
    <property type="entry name" value="hemC"/>
    <property type="match status" value="1"/>
</dbReference>
<dbReference type="PANTHER" id="PTHR11557">
    <property type="entry name" value="PORPHOBILINOGEN DEAMINASE"/>
    <property type="match status" value="1"/>
</dbReference>
<dbReference type="PANTHER" id="PTHR11557:SF0">
    <property type="entry name" value="PORPHOBILINOGEN DEAMINASE"/>
    <property type="match status" value="1"/>
</dbReference>
<dbReference type="Pfam" id="PF01379">
    <property type="entry name" value="Porphobil_deam"/>
    <property type="match status" value="1"/>
</dbReference>
<dbReference type="Pfam" id="PF03900">
    <property type="entry name" value="Porphobil_deamC"/>
    <property type="match status" value="1"/>
</dbReference>
<dbReference type="PIRSF" id="PIRSF001438">
    <property type="entry name" value="4pyrrol_synth_OHMeBilane_synth"/>
    <property type="match status" value="1"/>
</dbReference>
<dbReference type="PRINTS" id="PR00151">
    <property type="entry name" value="PORPHBDMNASE"/>
</dbReference>
<dbReference type="SUPFAM" id="SSF53850">
    <property type="entry name" value="Periplasmic binding protein-like II"/>
    <property type="match status" value="1"/>
</dbReference>
<dbReference type="SUPFAM" id="SSF54782">
    <property type="entry name" value="Porphobilinogen deaminase (hydroxymethylbilane synthase), C-terminal domain"/>
    <property type="match status" value="1"/>
</dbReference>
<dbReference type="PROSITE" id="PS00533">
    <property type="entry name" value="PORPHOBILINOGEN_DEAM"/>
    <property type="match status" value="1"/>
</dbReference>
<accession>Q3AWQ4</accession>
<name>HEM3_SYNS9</name>